<dbReference type="EMBL" id="V00612">
    <property type="protein sequence ID" value="CAA23883.1"/>
    <property type="molecule type" value="Genomic_DNA"/>
</dbReference>
<dbReference type="EMBL" id="M58746">
    <property type="protein sequence ID" value="AAA62776.1"/>
    <property type="molecule type" value="Genomic_DNA"/>
</dbReference>
<dbReference type="EMBL" id="M25607">
    <property type="protein sequence ID" value="AAA24653.1"/>
    <property type="molecule type" value="Genomic_DNA"/>
</dbReference>
<dbReference type="PIR" id="A01822">
    <property type="entry name" value="QHEC1"/>
</dbReference>
<dbReference type="RefSeq" id="WP_001353651.1">
    <property type="nucleotide sequence ID" value="NZ_WVUQ01000281.1"/>
</dbReference>
<dbReference type="PDB" id="1ETL">
    <property type="method" value="X-ray"/>
    <property type="resolution" value="0.89 A"/>
    <property type="chains" value="A=60-71"/>
</dbReference>
<dbReference type="PDB" id="1ETM">
    <property type="method" value="X-ray"/>
    <property type="resolution" value="0.89 A"/>
    <property type="chains" value="A=60-71"/>
</dbReference>
<dbReference type="PDB" id="1ETN">
    <property type="method" value="X-ray"/>
    <property type="resolution" value="0.89 A"/>
    <property type="chains" value="A=60-71"/>
</dbReference>
<dbReference type="PDB" id="8HR4">
    <property type="method" value="NMR"/>
    <property type="chains" value="A=59-71"/>
</dbReference>
<dbReference type="PDBsum" id="1ETL"/>
<dbReference type="PDBsum" id="1ETM"/>
<dbReference type="PDBsum" id="1ETN"/>
<dbReference type="PDBsum" id="8HR4"/>
<dbReference type="SMR" id="P01559"/>
<dbReference type="Reactome" id="R-HSA-8942233">
    <property type="pathway name" value="Intestinal infectious diseases"/>
</dbReference>
<dbReference type="EvolutionaryTrace" id="P01559"/>
<dbReference type="GO" id="GO:0005615">
    <property type="term" value="C:extracellular space"/>
    <property type="evidence" value="ECO:0007669"/>
    <property type="project" value="InterPro"/>
</dbReference>
<dbReference type="GO" id="GO:0090729">
    <property type="term" value="F:toxin activity"/>
    <property type="evidence" value="ECO:0007669"/>
    <property type="project" value="UniProtKB-KW"/>
</dbReference>
<dbReference type="InterPro" id="IPR019806">
    <property type="entry name" value="Heat-stable_enterotox_CS"/>
</dbReference>
<dbReference type="InterPro" id="IPR001489">
    <property type="entry name" value="Heat-stable_enterotox_STa"/>
</dbReference>
<dbReference type="Pfam" id="PF02048">
    <property type="entry name" value="Enterotoxin_ST"/>
    <property type="match status" value="1"/>
</dbReference>
<dbReference type="PROSITE" id="PS00273">
    <property type="entry name" value="ENTEROTOXIN_H_STABLE"/>
    <property type="match status" value="1"/>
</dbReference>
<name>HST1_ECOLX</name>
<comment type="function">
    <text>Toxin which activates the particulate form of guanylate cyclase and increases cyclic GMP levels within the host intestinal epithelial cells.</text>
</comment>
<comment type="subcellular location">
    <subcellularLocation>
        <location>Secreted</location>
    </subcellularLocation>
</comment>
<comment type="similarity">
    <text evidence="2">Belongs to the heat-stable enterotoxin family.</text>
</comment>
<protein>
    <recommendedName>
        <fullName>Heat-stable enterotoxin ST-IA/ST-P</fullName>
    </recommendedName>
    <alternativeName>
        <fullName>STh</fullName>
    </alternativeName>
    <alternativeName>
        <fullName>STp</fullName>
    </alternativeName>
</protein>
<organism>
    <name type="scientific">Escherichia coli</name>
    <dbReference type="NCBI Taxonomy" id="562"/>
    <lineage>
        <taxon>Bacteria</taxon>
        <taxon>Pseudomonadati</taxon>
        <taxon>Pseudomonadota</taxon>
        <taxon>Gammaproteobacteria</taxon>
        <taxon>Enterobacterales</taxon>
        <taxon>Enterobacteriaceae</taxon>
        <taxon>Escherichia</taxon>
    </lineage>
</organism>
<accession>P01559</accession>
<accession>Q47653</accession>
<gene>
    <name type="primary">sta1</name>
</gene>
<evidence type="ECO:0000269" key="1">
    <source>
    </source>
</evidence>
<evidence type="ECO:0000305" key="2"/>
<feature type="signal peptide">
    <location>
        <begin position="1"/>
        <end position="19"/>
    </location>
</feature>
<feature type="propeptide" id="PRO_0000035126">
    <location>
        <begin position="20"/>
        <end position="54"/>
    </location>
</feature>
<feature type="peptide" id="PRO_0000035127" description="Heat-stable enterotoxin ST-IA/ST-P">
    <location>
        <begin position="55"/>
        <end position="72"/>
    </location>
</feature>
<feature type="disulfide bond" evidence="1">
    <location>
        <begin position="59"/>
        <end position="64"/>
    </location>
</feature>
<feature type="disulfide bond" evidence="1">
    <location>
        <begin position="60"/>
        <end position="68"/>
    </location>
</feature>
<feature type="disulfide bond" evidence="1">
    <location>
        <begin position="63"/>
        <end position="71"/>
    </location>
</feature>
<feature type="sequence conflict" description="In Ref. 3; AAA24653." evidence="2" ref="3">
    <original>G</original>
    <variation>P</variation>
    <location>
        <position position="70"/>
    </location>
</feature>
<reference key="1">
    <citation type="journal article" date="1980" name="Proc. Natl. Acad. Sci. U.S.A.">
        <title>Nucleotide sequence of the bacterial transposon Tn1681 encoding a heat-stable (ST) toxin and its identification in enterotoxigenic Escherichia coli strains.</title>
        <authorList>
            <person name="So M."/>
            <person name="McCarthy B.J."/>
        </authorList>
    </citation>
    <scope>NUCLEOTIDE SEQUENCE [GENOMIC DNA]</scope>
    <source>
        <transposon>Tn1681</transposon>
    </source>
</reference>
<reference key="2">
    <citation type="journal article" date="1990" name="J. Bacteriol.">
        <title>The heat-stable toxin I gene from Escherichia coli 18D.</title>
        <authorList>
            <person name="Dallas W.S."/>
        </authorList>
    </citation>
    <scope>NUCLEOTIDE SEQUENCE [GENOMIC DNA]</scope>
    <source>
        <strain>O42:K86:H37 / 18D / ETEC</strain>
    </source>
</reference>
<reference key="3">
    <citation type="journal article" date="1985" name="Am. J. Vet. Res.">
        <title>Nucleotide sequences of the genes for Escherichia coli heat-stable enterotoxin I of bovine, avian, and porcine origins.</title>
        <authorList>
            <person name="Sekizaki T."/>
            <person name="Akashi H."/>
            <person name="Terakado N."/>
        </authorList>
    </citation>
    <scope>NUCLEOTIDE SEQUENCE [GENOMIC DNA]</scope>
</reference>
<reference key="4">
    <citation type="journal article" date="1987" name="FEBS Lett.">
        <title>Mode of disulfide bond formation of a heat-stable enterotoxin (STh) produced by a human strain of enterotoxigenic Escherichia coli.</title>
        <authorList>
            <person name="Shimonishi Y."/>
            <person name="Hidaka Y."/>
            <person name="Koizumi M."/>
            <person name="Hane M."/>
            <person name="Aimoto S."/>
            <person name="Takeda T."/>
            <person name="Miwatani T."/>
            <person name="Takeda Y."/>
        </authorList>
    </citation>
    <scope>DISULFIDE BONDS</scope>
</reference>
<reference key="5">
    <citation type="journal article" date="1990" name="J. Bacteriol.">
        <title>Synthesis of Escherichia coli heat-stable enterotoxin STp as a pre-pro form and role of the pro sequence in secretion.</title>
        <authorList>
            <person name="Okamoto K."/>
            <person name="Takahara M."/>
        </authorList>
    </citation>
    <scope>PROTEOLYTIC PROCESSING</scope>
</reference>
<reference key="6">
    <citation type="journal article" date="1994" name="Biochemistry">
        <title>Structural characteristics for biological activity of heat-stable enterotoxin produced by enterotoxigenic Escherichia coli: X-ray crystallography of weakly toxic and nontoxic analogs.</title>
        <authorList>
            <person name="Sato T."/>
            <person name="Ozaki H."/>
            <person name="Hata Y."/>
            <person name="Kitagawa Y."/>
            <person name="Katsube Y."/>
            <person name="Shimonishi Y."/>
        </authorList>
    </citation>
    <scope>X-RAY CRYSTALLOGRAPHY (0.89 ANGSTROMS) OF 59-71</scope>
</reference>
<proteinExistence type="evidence at protein level"/>
<keyword id="KW-0002">3D-structure</keyword>
<keyword id="KW-1015">Disulfide bond</keyword>
<keyword id="KW-0260">Enterotoxin</keyword>
<keyword id="KW-0964">Secreted</keyword>
<keyword id="KW-0732">Signal</keyword>
<keyword id="KW-0800">Toxin</keyword>
<keyword id="KW-0814">Transposable element</keyword>
<keyword id="KW-0843">Virulence</keyword>
<sequence length="72" mass="8075">MKKLMLAIFISVLSFPSFSQSTESLDSSKEKITLETKKCDVVKNNSEKKSENMNNTFYCCELCCNPACAGCY</sequence>